<keyword id="KW-0067">ATP-binding</keyword>
<keyword id="KW-0378">Hydrolase</keyword>
<keyword id="KW-0547">Nucleotide-binding</keyword>
<keyword id="KW-1185">Reference proteome</keyword>
<protein>
    <recommendedName>
        <fullName evidence="1">5-oxoprolinase subunit A</fullName>
        <shortName evidence="1">5-OPase subunit A</shortName>
        <ecNumber evidence="1">3.5.2.9</ecNumber>
    </recommendedName>
    <alternativeName>
        <fullName evidence="1">5-oxoprolinase (ATP-hydrolyzing) subunit A</fullName>
    </alternativeName>
</protein>
<sequence length="244" mass="25916">MKIDLNADLGEGCASDAELLTLVSSANIACGFHAGDAQTMQACVREAIKNGVAIGAHPSFPDRENFGRSAMQLPPETVYAQTLYQIGALATIARAQGGVMRHVKPHGMLYNQAAKEAQLADAIARAVYACDPALVLVGLAGSELIRAGKQYGLTTREEVFADRGYQADGSLVPRSQPGALIENEEQALAQTLEMVQHGRVKSITGEWATVTAQTVCLHGDGEHALAFARRLRSTFAEKEIVVAA</sequence>
<reference key="1">
    <citation type="journal article" date="2008" name="J. Bacteriol.">
        <title>The pangenome structure of Escherichia coli: comparative genomic analysis of E. coli commensal and pathogenic isolates.</title>
        <authorList>
            <person name="Rasko D.A."/>
            <person name="Rosovitz M.J."/>
            <person name="Myers G.S.A."/>
            <person name="Mongodin E.F."/>
            <person name="Fricke W.F."/>
            <person name="Gajer P."/>
            <person name="Crabtree J."/>
            <person name="Sebaihia M."/>
            <person name="Thomson N.R."/>
            <person name="Chaudhuri R."/>
            <person name="Henderson I.R."/>
            <person name="Sperandio V."/>
            <person name="Ravel J."/>
        </authorList>
    </citation>
    <scope>NUCLEOTIDE SEQUENCE [LARGE SCALE GENOMIC DNA]</scope>
    <source>
        <strain>E24377A / ETEC</strain>
    </source>
</reference>
<gene>
    <name evidence="1" type="primary">pxpA</name>
    <name type="ordered locus">EcE24377A_0738</name>
</gene>
<evidence type="ECO:0000255" key="1">
    <source>
        <dbReference type="HAMAP-Rule" id="MF_00691"/>
    </source>
</evidence>
<organism>
    <name type="scientific">Escherichia coli O139:H28 (strain E24377A / ETEC)</name>
    <dbReference type="NCBI Taxonomy" id="331111"/>
    <lineage>
        <taxon>Bacteria</taxon>
        <taxon>Pseudomonadati</taxon>
        <taxon>Pseudomonadota</taxon>
        <taxon>Gammaproteobacteria</taxon>
        <taxon>Enterobacterales</taxon>
        <taxon>Enterobacteriaceae</taxon>
        <taxon>Escherichia</taxon>
    </lineage>
</organism>
<comment type="function">
    <text evidence="1">Catalyzes the cleavage of 5-oxoproline to form L-glutamate coupled to the hydrolysis of ATP to ADP and inorganic phosphate.</text>
</comment>
<comment type="catalytic activity">
    <reaction evidence="1">
        <text>5-oxo-L-proline + ATP + 2 H2O = L-glutamate + ADP + phosphate + H(+)</text>
        <dbReference type="Rhea" id="RHEA:10348"/>
        <dbReference type="ChEBI" id="CHEBI:15377"/>
        <dbReference type="ChEBI" id="CHEBI:15378"/>
        <dbReference type="ChEBI" id="CHEBI:29985"/>
        <dbReference type="ChEBI" id="CHEBI:30616"/>
        <dbReference type="ChEBI" id="CHEBI:43474"/>
        <dbReference type="ChEBI" id="CHEBI:58402"/>
        <dbReference type="ChEBI" id="CHEBI:456216"/>
        <dbReference type="EC" id="3.5.2.9"/>
    </reaction>
</comment>
<comment type="subunit">
    <text evidence="1">Forms a complex composed of PxpA, PxpB and PxpC.</text>
</comment>
<comment type="similarity">
    <text evidence="1">Belongs to the LamB/PxpA family.</text>
</comment>
<feature type="chain" id="PRO_1000062021" description="5-oxoprolinase subunit A">
    <location>
        <begin position="1"/>
        <end position="244"/>
    </location>
</feature>
<proteinExistence type="inferred from homology"/>
<name>PXPA_ECO24</name>
<accession>A7ZJ94</accession>
<dbReference type="EC" id="3.5.2.9" evidence="1"/>
<dbReference type="EMBL" id="CP000800">
    <property type="protein sequence ID" value="ABV20296.1"/>
    <property type="molecule type" value="Genomic_DNA"/>
</dbReference>
<dbReference type="RefSeq" id="WP_000687142.1">
    <property type="nucleotide sequence ID" value="NC_009801.1"/>
</dbReference>
<dbReference type="SMR" id="A7ZJ94"/>
<dbReference type="GeneID" id="75205545"/>
<dbReference type="KEGG" id="ecw:EcE24377A_0738"/>
<dbReference type="HOGENOM" id="CLU_069535_0_0_6"/>
<dbReference type="Proteomes" id="UP000001122">
    <property type="component" value="Chromosome"/>
</dbReference>
<dbReference type="GO" id="GO:0017168">
    <property type="term" value="F:5-oxoprolinase (ATP-hydrolyzing) activity"/>
    <property type="evidence" value="ECO:0007669"/>
    <property type="project" value="UniProtKB-UniRule"/>
</dbReference>
<dbReference type="GO" id="GO:0005524">
    <property type="term" value="F:ATP binding"/>
    <property type="evidence" value="ECO:0007669"/>
    <property type="project" value="UniProtKB-UniRule"/>
</dbReference>
<dbReference type="GO" id="GO:0005975">
    <property type="term" value="P:carbohydrate metabolic process"/>
    <property type="evidence" value="ECO:0007669"/>
    <property type="project" value="InterPro"/>
</dbReference>
<dbReference type="CDD" id="cd10800">
    <property type="entry name" value="LamB_YcsF_YbgL_like"/>
    <property type="match status" value="1"/>
</dbReference>
<dbReference type="Gene3D" id="3.20.20.370">
    <property type="entry name" value="Glycoside hydrolase/deacetylase"/>
    <property type="match status" value="1"/>
</dbReference>
<dbReference type="HAMAP" id="MF_00691">
    <property type="entry name" value="PxpA"/>
    <property type="match status" value="1"/>
</dbReference>
<dbReference type="InterPro" id="IPR011330">
    <property type="entry name" value="Glyco_hydro/deAcase_b/a-brl"/>
</dbReference>
<dbReference type="InterPro" id="IPR005501">
    <property type="entry name" value="LamB/YcsF/PxpA-like"/>
</dbReference>
<dbReference type="NCBIfam" id="NF003812">
    <property type="entry name" value="PRK05406.1-1"/>
    <property type="match status" value="1"/>
</dbReference>
<dbReference type="NCBIfam" id="NF003814">
    <property type="entry name" value="PRK05406.1-3"/>
    <property type="match status" value="1"/>
</dbReference>
<dbReference type="NCBIfam" id="NF003815">
    <property type="entry name" value="PRK05406.1-4"/>
    <property type="match status" value="1"/>
</dbReference>
<dbReference type="NCBIfam" id="NF003816">
    <property type="entry name" value="PRK05406.1-5"/>
    <property type="match status" value="1"/>
</dbReference>
<dbReference type="PANTHER" id="PTHR30292:SF0">
    <property type="entry name" value="5-OXOPROLINASE SUBUNIT A"/>
    <property type="match status" value="1"/>
</dbReference>
<dbReference type="PANTHER" id="PTHR30292">
    <property type="entry name" value="UNCHARACTERIZED PROTEIN YBGL-RELATED"/>
    <property type="match status" value="1"/>
</dbReference>
<dbReference type="Pfam" id="PF03746">
    <property type="entry name" value="LamB_YcsF"/>
    <property type="match status" value="1"/>
</dbReference>
<dbReference type="SUPFAM" id="SSF88713">
    <property type="entry name" value="Glycoside hydrolase/deacetylase"/>
    <property type="match status" value="1"/>
</dbReference>